<gene>
    <name evidence="27" type="primary">PNPT1</name>
    <name type="synonym">PNPASE</name>
</gene>
<organism>
    <name type="scientific">Homo sapiens</name>
    <name type="common">Human</name>
    <dbReference type="NCBI Taxonomy" id="9606"/>
    <lineage>
        <taxon>Eukaryota</taxon>
        <taxon>Metazoa</taxon>
        <taxon>Chordata</taxon>
        <taxon>Craniata</taxon>
        <taxon>Vertebrata</taxon>
        <taxon>Euteleostomi</taxon>
        <taxon>Mammalia</taxon>
        <taxon>Eutheria</taxon>
        <taxon>Euarchontoglires</taxon>
        <taxon>Primates</taxon>
        <taxon>Haplorrhini</taxon>
        <taxon>Catarrhini</taxon>
        <taxon>Hominidae</taxon>
        <taxon>Homo</taxon>
    </lineage>
</organism>
<reference key="1">
    <citation type="journal article" date="2002" name="J. Mol. Biol.">
        <title>Protein-protein interactions between human exosome components support the assembly of RNase PH-type subunits into a six-membered PNPase-like ring.</title>
        <authorList>
            <person name="Raijmakers R."/>
            <person name="Vree Egberts W."/>
            <person name="van Venrooij W.J."/>
            <person name="Pruijn G.J.M."/>
        </authorList>
    </citation>
    <scope>NUCLEOTIDE SEQUENCE [MRNA]</scope>
    <scope>VARIANT VAL-121</scope>
    <source>
        <tissue>Teratocarcinoma</tissue>
    </source>
</reference>
<reference key="2">
    <citation type="journal article" date="2002" name="Proc. Natl. Acad. Sci. U.S.A.">
        <title>Identification and cloning of human polynucleotide phosphorylase, hPNPase (old-35), in the context of terminal differentiation and cellular senescence.</title>
        <authorList>
            <person name="Leszczyniecka M."/>
            <person name="Kang D.-C."/>
            <person name="Sarkar D."/>
            <person name="Su Z.-Z."/>
            <person name="Holmes M."/>
            <person name="Valerie K."/>
            <person name="Fisher P.B."/>
        </authorList>
    </citation>
    <scope>NUCLEOTIDE SEQUENCE [MRNA]</scope>
    <scope>VARIANT VAL-121</scope>
    <scope>FUNCTION</scope>
    <scope>INDUCTION</scope>
    <source>
        <tissue>Melanoma</tissue>
    </source>
</reference>
<reference key="3">
    <citation type="journal article" date="2005" name="Nature">
        <title>Generation and annotation of the DNA sequences of human chromosomes 2 and 4.</title>
        <authorList>
            <person name="Hillier L.W."/>
            <person name="Graves T.A."/>
            <person name="Fulton R.S."/>
            <person name="Fulton L.A."/>
            <person name="Pepin K.H."/>
            <person name="Minx P."/>
            <person name="Wagner-McPherson C."/>
            <person name="Layman D."/>
            <person name="Wylie K."/>
            <person name="Sekhon M."/>
            <person name="Becker M.C."/>
            <person name="Fewell G.A."/>
            <person name="Delehaunty K.D."/>
            <person name="Miner T.L."/>
            <person name="Nash W.E."/>
            <person name="Kremitzki C."/>
            <person name="Oddy L."/>
            <person name="Du H."/>
            <person name="Sun H."/>
            <person name="Bradshaw-Cordum H."/>
            <person name="Ali J."/>
            <person name="Carter J."/>
            <person name="Cordes M."/>
            <person name="Harris A."/>
            <person name="Isak A."/>
            <person name="van Brunt A."/>
            <person name="Nguyen C."/>
            <person name="Du F."/>
            <person name="Courtney L."/>
            <person name="Kalicki J."/>
            <person name="Ozersky P."/>
            <person name="Abbott S."/>
            <person name="Armstrong J."/>
            <person name="Belter E.A."/>
            <person name="Caruso L."/>
            <person name="Cedroni M."/>
            <person name="Cotton M."/>
            <person name="Davidson T."/>
            <person name="Desai A."/>
            <person name="Elliott G."/>
            <person name="Erb T."/>
            <person name="Fronick C."/>
            <person name="Gaige T."/>
            <person name="Haakenson W."/>
            <person name="Haglund K."/>
            <person name="Holmes A."/>
            <person name="Harkins R."/>
            <person name="Kim K."/>
            <person name="Kruchowski S.S."/>
            <person name="Strong C.M."/>
            <person name="Grewal N."/>
            <person name="Goyea E."/>
            <person name="Hou S."/>
            <person name="Levy A."/>
            <person name="Martinka S."/>
            <person name="Mead K."/>
            <person name="McLellan M.D."/>
            <person name="Meyer R."/>
            <person name="Randall-Maher J."/>
            <person name="Tomlinson C."/>
            <person name="Dauphin-Kohlberg S."/>
            <person name="Kozlowicz-Reilly A."/>
            <person name="Shah N."/>
            <person name="Swearengen-Shahid S."/>
            <person name="Snider J."/>
            <person name="Strong J.T."/>
            <person name="Thompson J."/>
            <person name="Yoakum M."/>
            <person name="Leonard S."/>
            <person name="Pearman C."/>
            <person name="Trani L."/>
            <person name="Radionenko M."/>
            <person name="Waligorski J.E."/>
            <person name="Wang C."/>
            <person name="Rock S.M."/>
            <person name="Tin-Wollam A.-M."/>
            <person name="Maupin R."/>
            <person name="Latreille P."/>
            <person name="Wendl M.C."/>
            <person name="Yang S.-P."/>
            <person name="Pohl C."/>
            <person name="Wallis J.W."/>
            <person name="Spieth J."/>
            <person name="Bieri T.A."/>
            <person name="Berkowicz N."/>
            <person name="Nelson J.O."/>
            <person name="Osborne J."/>
            <person name="Ding L."/>
            <person name="Meyer R."/>
            <person name="Sabo A."/>
            <person name="Shotland Y."/>
            <person name="Sinha P."/>
            <person name="Wohldmann P.E."/>
            <person name="Cook L.L."/>
            <person name="Hickenbotham M.T."/>
            <person name="Eldred J."/>
            <person name="Williams D."/>
            <person name="Jones T.A."/>
            <person name="She X."/>
            <person name="Ciccarelli F.D."/>
            <person name="Izaurralde E."/>
            <person name="Taylor J."/>
            <person name="Schmutz J."/>
            <person name="Myers R.M."/>
            <person name="Cox D.R."/>
            <person name="Huang X."/>
            <person name="McPherson J.D."/>
            <person name="Mardis E.R."/>
            <person name="Clifton S.W."/>
            <person name="Warren W.C."/>
            <person name="Chinwalla A.T."/>
            <person name="Eddy S.R."/>
            <person name="Marra M.A."/>
            <person name="Ovcharenko I."/>
            <person name="Furey T.S."/>
            <person name="Miller W."/>
            <person name="Eichler E.E."/>
            <person name="Bork P."/>
            <person name="Suyama M."/>
            <person name="Torrents D."/>
            <person name="Waterston R.H."/>
            <person name="Wilson R.K."/>
        </authorList>
    </citation>
    <scope>NUCLEOTIDE SEQUENCE [LARGE SCALE GENOMIC DNA]</scope>
</reference>
<reference key="4">
    <citation type="journal article" date="2004" name="Genome Res.">
        <title>The status, quality, and expansion of the NIH full-length cDNA project: the Mammalian Gene Collection (MGC).</title>
        <authorList>
            <consortium name="The MGC Project Team"/>
        </authorList>
    </citation>
    <scope>NUCLEOTIDE SEQUENCE [LARGE SCALE MRNA]</scope>
    <scope>VARIANT VAL-121</scope>
    <source>
        <tissue>Cervix</tissue>
        <tissue>Skin</tissue>
        <tissue>Urinary bladder</tissue>
    </source>
</reference>
<reference key="5">
    <citation type="submission" date="2003-05" db="EMBL/GenBank/DDBJ databases">
        <title>Immunogenic antigens eliciting humoral immune response identified in leukemia cells by SEREX method.</title>
        <authorList>
            <person name="Takahashi H."/>
            <person name="Furukawa T."/>
            <person name="Yano T."/>
            <person name="Takizawa J."/>
            <person name="Abe T."/>
            <person name="Narita M."/>
            <person name="Fuse I."/>
            <person name="Koyama S."/>
            <person name="Takahashi M."/>
            <person name="Aizawa Y."/>
        </authorList>
    </citation>
    <scope>NUCLEOTIDE SEQUENCE [MRNA] OF 509-783</scope>
</reference>
<reference key="6">
    <citation type="journal article" date="2007" name="BMC Genomics">
        <title>The full-ORF clone resource of the German cDNA consortium.</title>
        <authorList>
            <person name="Bechtel S."/>
            <person name="Rosenfelder H."/>
            <person name="Duda A."/>
            <person name="Schmidt C.P."/>
            <person name="Ernst U."/>
            <person name="Wellenreuther R."/>
            <person name="Mehrle A."/>
            <person name="Schuster C."/>
            <person name="Bahr A."/>
            <person name="Bloecker H."/>
            <person name="Heubner D."/>
            <person name="Hoerlein A."/>
            <person name="Michel G."/>
            <person name="Wedler H."/>
            <person name="Koehrer K."/>
            <person name="Ottenwaelder B."/>
            <person name="Poustka A."/>
            <person name="Wiemann S."/>
            <person name="Schupp I."/>
        </authorList>
    </citation>
    <scope>NUCLEOTIDE SEQUENCE [LARGE SCALE MRNA] OF 538-783</scope>
    <source>
        <tissue>Melanoma</tissue>
    </source>
</reference>
<reference key="7">
    <citation type="journal article" date="2003" name="J. Biol. Chem.">
        <title>Down-regulation of Myc as a potential target for growth arrest induced by human polynucleotide phosphorylase (hPNPaseold-35) in human melanoma cells.</title>
        <authorList>
            <person name="Sarkar D."/>
            <person name="Leszczyniecka M."/>
            <person name="Kang D.C."/>
            <person name="Lebedeva I.V."/>
            <person name="Valerie K."/>
            <person name="Dhar S."/>
            <person name="Pandita T.K."/>
            <person name="Fisher P.B."/>
        </authorList>
    </citation>
    <scope>FUNCTION</scope>
</reference>
<reference key="8">
    <citation type="journal article" date="2003" name="J. Mol. Biol.">
        <title>Human polynucleotide phosphorylase, hPNPase, is localized in mitochondria.</title>
        <authorList>
            <person name="Piwowarski J."/>
            <person name="Grzechnik P."/>
            <person name="Dziembowski A."/>
            <person name="Dmochowska A."/>
            <person name="Minczuk M."/>
            <person name="Stepien P.P."/>
        </authorList>
    </citation>
    <scope>FUNCTION</scope>
    <scope>SUBCELLULAR LOCATION</scope>
</reference>
<reference key="9">
    <citation type="journal article" date="2005" name="Mol. Cell. Biol.">
        <title>Defining the domains of human polynucleotide phosphorylase (hPNPaseOLD-35) mediating cellular senescence.</title>
        <authorList>
            <person name="Sarkar D."/>
            <person name="Park E.S."/>
            <person name="Emdad L."/>
            <person name="Randolph A."/>
            <person name="Valerie K."/>
            <person name="Fisher P.B."/>
        </authorList>
    </citation>
    <scope>FUNCTION</scope>
    <scope>SUBCELLULAR LOCATION</scope>
</reference>
<reference key="10">
    <citation type="journal article" date="2006" name="Cell Death Differ.">
        <title>Defining the mechanism by which IFN-beta dowregulates c-myc expression in human melanoma cells: pivotal role for human polynucleotide phosphorylase (hPNPaseold-35).</title>
        <authorList>
            <person name="Sarkar D."/>
            <person name="Park E.S."/>
            <person name="Fisher P.B."/>
        </authorList>
    </citation>
    <scope>FUNCTION</scope>
    <scope>INDUCTION</scope>
</reference>
<reference key="11">
    <citation type="journal article" date="2006" name="Mol. Cell. Biol.">
        <title>Mammalian polynucleotide phosphorylase is an intermembrane space RNase that maintains mitochondrial homeostasis.</title>
        <authorList>
            <person name="Chen H.W."/>
            <person name="Rainey R.N."/>
            <person name="Balatoni C.E."/>
            <person name="Dawson D.W."/>
            <person name="Troke J.J."/>
            <person name="Wasiak S."/>
            <person name="Hong J.S."/>
            <person name="McBride H.M."/>
            <person name="Koehler C.M."/>
            <person name="Teitell M.A."/>
            <person name="French S.W."/>
        </authorList>
    </citation>
    <scope>SUBCELLULAR LOCATION</scope>
    <scope>INDUCTION</scope>
</reference>
<reference key="12">
    <citation type="journal article" date="2007" name="Cancer Lett.">
        <title>The TCL1 oncoprotein binds the RNase PH domains of the PNPase exoribonuclease without affecting its RNA degrading activity.</title>
        <authorList>
            <person name="French S.W."/>
            <person name="Dawson D.W."/>
            <person name="Chen H.-W."/>
            <person name="Rainey R.N."/>
            <person name="Sievers S.A."/>
            <person name="Balatoni C.E."/>
            <person name="Wong L."/>
            <person name="Troke J.J."/>
            <person name="Nguyen M.T.N."/>
            <person name="Koehler C.M."/>
            <person name="Teitell M.A."/>
        </authorList>
    </citation>
    <scope>FUNCTION</scope>
    <scope>INTERACTION WITH TCL1A</scope>
    <scope>IDENTIFICATION BY MASS SPECTROMETRY</scope>
</reference>
<reference key="13">
    <citation type="journal article" date="2008" name="Biochem. Biophys. Res. Commun.">
        <title>Human polynucleotide phosphorylase reduces oxidative RNA damage and protects HeLa cell against oxidative stress.</title>
        <authorList>
            <person name="Wu J."/>
            <person name="Li Z."/>
        </authorList>
    </citation>
    <scope>FUNCTION</scope>
</reference>
<reference key="14">
    <citation type="journal article" date="2008" name="RNA">
        <title>Analysis of the human polynucleotide phosphorylase (PNPase) reveals differences in RNA binding and response to phosphate compared to its bacterial and chloroplast counterparts.</title>
        <authorList>
            <person name="Portnoy V."/>
            <person name="Palnizky G."/>
            <person name="Yehudai-Resheff S."/>
            <person name="Glaser F."/>
            <person name="Schuster G."/>
        </authorList>
    </citation>
    <scope>FUNCTION</scope>
    <scope>CATALYTIC ACTIVITY</scope>
    <scope>RNA-BINDING</scope>
</reference>
<reference key="15">
    <citation type="journal article" date="2008" name="RNA">
        <title>Stable PNPase RNAi silencing: its effect on the processing and adenylation of human mitochondrial RNA.</title>
        <authorList>
            <person name="Slomovic S."/>
            <person name="Schuster G."/>
        </authorList>
    </citation>
    <scope>FUNCTION</scope>
</reference>
<reference key="16">
    <citation type="journal article" date="2009" name="J. Biol. Chem.">
        <title>Human mitochondrial SUV3 and polynucleotide phosphorylase form a 330-kDa heteropentamer to cooperatively degrade double-stranded RNA with a 3'-to-5' directionality.</title>
        <authorList>
            <person name="Wang D.D."/>
            <person name="Shu Z."/>
            <person name="Lieser S.A."/>
            <person name="Chen P.L."/>
            <person name="Lee W.H."/>
        </authorList>
    </citation>
    <scope>FUNCTION</scope>
    <scope>IDENTIFICATION IN THE MITOCHONDRIAL DEGRADOSOME COMPLEX</scope>
    <scope>HOMOTRIMERIZATION</scope>
</reference>
<reference key="17">
    <citation type="journal article" date="2009" name="Science">
        <title>Lysine acetylation targets protein complexes and co-regulates major cellular functions.</title>
        <authorList>
            <person name="Choudhary C."/>
            <person name="Kumar C."/>
            <person name="Gnad F."/>
            <person name="Nielsen M.L."/>
            <person name="Rehman M."/>
            <person name="Walther T.C."/>
            <person name="Olsen J.V."/>
            <person name="Mann M."/>
        </authorList>
    </citation>
    <scope>ACETYLATION [LARGE SCALE ANALYSIS] AT LYS-264; LYS-285 AND LYS-289</scope>
    <scope>IDENTIFICATION BY MASS SPECTROMETRY [LARGE SCALE ANALYSIS]</scope>
</reference>
<reference key="18">
    <citation type="journal article" date="2010" name="Cell">
        <title>PNPASE regulates RNA import into mitochondria.</title>
        <authorList>
            <person name="Wang G."/>
            <person name="Chen H.W."/>
            <person name="Oktay Y."/>
            <person name="Zhang J."/>
            <person name="Allen E.L."/>
            <person name="Smith G.M."/>
            <person name="Fan K.C."/>
            <person name="Hong J.S."/>
            <person name="French S.W."/>
            <person name="McCaffery J.M."/>
            <person name="Lightowlers R.N."/>
            <person name="Morse H.C. III"/>
            <person name="Koehler C.M."/>
            <person name="Teitell M.A."/>
        </authorList>
    </citation>
    <scope>FUNCTION</scope>
    <scope>HOMOTRIMERIZATION</scope>
    <scope>HOMOOLIGOMERIZATION</scope>
    <scope>MUTAGENESIS OF ASP-135; 445-ARG-ARG-446; SER-484 AND ASP-544</scope>
</reference>
<reference key="19">
    <citation type="journal article" date="2010" name="Proc. Natl. Acad. Sci. U.S.A.">
        <title>Human polynucleotide phosphorylase selectively and preferentially degrades microRNA-221 in human melanoma cells.</title>
        <authorList>
            <person name="Das S.K."/>
            <person name="Sokhi U.K."/>
            <person name="Bhutia S.K."/>
            <person name="Azab B."/>
            <person name="Su Z.Z."/>
            <person name="Sarkar D."/>
            <person name="Fisher P.B."/>
        </authorList>
    </citation>
    <scope>FUNCTION</scope>
</reference>
<reference key="20">
    <citation type="journal article" date="2011" name="BMC Syst. Biol.">
        <title>Initial characterization of the human central proteome.</title>
        <authorList>
            <person name="Burkard T.R."/>
            <person name="Planyavsky M."/>
            <person name="Kaupe I."/>
            <person name="Breitwieser F.P."/>
            <person name="Buerckstuemmer T."/>
            <person name="Bennett K.L."/>
            <person name="Superti-Furga G."/>
            <person name="Colinge J."/>
        </authorList>
    </citation>
    <scope>IDENTIFICATION BY MASS SPECTROMETRY [LARGE SCALE ANALYSIS]</scope>
</reference>
<reference key="21">
    <citation type="journal article" date="2011" name="Sci. Signal.">
        <title>System-wide temporal characterization of the proteome and phosphoproteome of human embryonic stem cell differentiation.</title>
        <authorList>
            <person name="Rigbolt K.T."/>
            <person name="Prokhorova T.A."/>
            <person name="Akimov V."/>
            <person name="Henningsen J."/>
            <person name="Johansen P.T."/>
            <person name="Kratchmarova I."/>
            <person name="Kassem M."/>
            <person name="Mann M."/>
            <person name="Olsen J.V."/>
            <person name="Blagoev B."/>
        </authorList>
    </citation>
    <scope>PHOSPHORYLATION [LARGE SCALE ANALYSIS] AT SER-782</scope>
    <scope>IDENTIFICATION BY MASS SPECTROMETRY [LARGE SCALE ANALYSIS]</scope>
</reference>
<reference key="22">
    <citation type="journal article" date="2013" name="J. Proteome Res.">
        <title>Toward a comprehensive characterization of a human cancer cell phosphoproteome.</title>
        <authorList>
            <person name="Zhou H."/>
            <person name="Di Palma S."/>
            <person name="Preisinger C."/>
            <person name="Peng M."/>
            <person name="Polat A.N."/>
            <person name="Heck A.J."/>
            <person name="Mohammed S."/>
        </authorList>
    </citation>
    <scope>PHOSPHORYLATION [LARGE SCALE ANALYSIS] AT SER-754</scope>
    <scope>IDENTIFICATION BY MASS SPECTROMETRY [LARGE SCALE ANALYSIS]</scope>
    <source>
        <tissue>Cervix carcinoma</tissue>
        <tissue>Erythroleukemia</tissue>
    </source>
</reference>
<reference key="23">
    <citation type="journal article" date="2015" name="Proteomics">
        <title>N-terminome analysis of the human mitochondrial proteome.</title>
        <authorList>
            <person name="Vaca Jacome A.S."/>
            <person name="Rabilloud T."/>
            <person name="Schaeffer-Reiss C."/>
            <person name="Rompais M."/>
            <person name="Ayoub D."/>
            <person name="Lane L."/>
            <person name="Bairoch A."/>
            <person name="Van Dorsselaer A."/>
            <person name="Carapito C."/>
        </authorList>
    </citation>
    <scope>IDENTIFICATION BY MASS SPECTROMETRY [LARGE SCALE ANALYSIS]</scope>
</reference>
<reference key="24">
    <citation type="journal article" date="2018" name="Nat. Commun.">
        <title>Dedicated surveillance mechanism controls G-quadruplex forming non-coding RNAs in human mitochondria.</title>
        <authorList>
            <person name="Pietras Z."/>
            <person name="Wojcik M.A."/>
            <person name="Borowski L.S."/>
            <person name="Szewczyk M."/>
            <person name="Kulinski T.M."/>
            <person name="Cysewski D."/>
            <person name="Stepien P.P."/>
            <person name="Dziembowski A."/>
            <person name="Szczesny R.J."/>
        </authorList>
    </citation>
    <scope>FUNCTION</scope>
    <scope>IDENTIFICATION IN THE MITOCHONDRIAL DEGRADOSOME COMPLEX</scope>
    <scope>INTERACTION WITH GRSF1</scope>
</reference>
<reference key="25">
    <citation type="journal article" date="2024" name="Mol. Cell">
        <title>RNA 5-methylcytosine marks mitochondrial double-stranded RNAs for degradation and cytosolic release.</title>
        <authorList>
            <person name="Kim S."/>
            <person name="Tan S."/>
            <person name="Ku J."/>
            <person name="Widowati T.A."/>
            <person name="Ku D."/>
            <person name="Lee K."/>
            <person name="You K."/>
            <person name="Kim Y."/>
        </authorList>
    </citation>
    <scope>FUNCTION</scope>
</reference>
<reference key="26">
    <citation type="journal article" date="2012" name="Am. J. Hum. Genet.">
        <title>Mutation in PNPT1, which encodes a polyribonucleotide nucleotidyltransferase, impairs RNA import into mitochondria and causes respiratory-chain deficiency.</title>
        <authorList>
            <person name="Vedrenne V."/>
            <person name="Gowher A."/>
            <person name="De Lonlay P."/>
            <person name="Nitschke P."/>
            <person name="Serre V."/>
            <person name="Boddaert N."/>
            <person name="Altuzarra C."/>
            <person name="Mager-Heckel A.M."/>
            <person name="Chretien F."/>
            <person name="Entelis N."/>
            <person name="Munnich A."/>
            <person name="Tarassov I."/>
            <person name="Rotig A."/>
        </authorList>
    </citation>
    <scope>VARIANT COXPD13 ARG-387</scope>
    <scope>CHARACTERIZATION OF VARIANT COXPD13 ARG-387</scope>
</reference>
<reference key="27">
    <citation type="journal article" date="2012" name="Am. J. Hum. Genet.">
        <title>A mutation in PNPT1, encoding mitochondrial-RNA-import protein PNPase, causes hereditary hearing loss.</title>
        <authorList>
            <person name="von Ameln S."/>
            <person name="Wang G."/>
            <person name="Boulouiz R."/>
            <person name="Rutherford M.A."/>
            <person name="Smith G.M."/>
            <person name="Li Y."/>
            <person name="Pogoda H.M."/>
            <person name="Nurnberg G."/>
            <person name="Stiller B."/>
            <person name="Volk A.E."/>
            <person name="Borck G."/>
            <person name="Hong J.S."/>
            <person name="Goodyear R.J."/>
            <person name="Abidi O."/>
            <person name="Nurnberg P."/>
            <person name="Hofmann K."/>
            <person name="Richardson G.P."/>
            <person name="Hammerschmidt M."/>
            <person name="Moser T."/>
            <person name="Wollnik B."/>
            <person name="Koehler C.M."/>
            <person name="Teitell M.A."/>
            <person name="Barakat A."/>
            <person name="Kubisch C."/>
        </authorList>
    </citation>
    <scope>VARIANT DFNB70 GLY-475</scope>
    <scope>CHARACTERIZATION OF VARIANT DFNB70 GLY-475</scope>
</reference>
<reference key="28">
    <citation type="journal article" date="2022" name="Ann. Neurol.">
        <title>Heterozygous PNPT1 Variants Cause Spinocerebellar Ataxia Type 25.</title>
        <authorList>
            <person name="Barbier M."/>
            <person name="Bahlo M."/>
            <person name="Pennisi A."/>
            <person name="Jacoupy M."/>
            <person name="Tankard R.M."/>
            <person name="Ewenczyk C."/>
            <person name="Davies K.C."/>
            <person name="Lino-Coulon P."/>
            <person name="Colace C."/>
            <person name="Rafehi H."/>
            <person name="Auger N."/>
            <person name="Ansell B.R.E."/>
            <person name="van der Stelt I."/>
            <person name="Howell K.B."/>
            <person name="Coutelier M."/>
            <person name="Amor D.J."/>
            <person name="Mundwiller E."/>
            <person name="Guillot-Noel L."/>
            <person name="Storey E."/>
            <person name="Gardner R.J.M."/>
            <person name="Wallis M.J."/>
            <person name="Brusco A."/>
            <person name="Corti O."/>
            <person name="Roetig A."/>
            <person name="Leventer R.J."/>
            <person name="Brice A."/>
            <person name="Delatycki M.B."/>
            <person name="Stevanin G."/>
            <person name="Lockhart P.J."/>
            <person name="Durr A."/>
        </authorList>
    </citation>
    <scope>INVOLVEMENT IN SCA25</scope>
</reference>
<evidence type="ECO:0000250" key="1">
    <source>
        <dbReference type="UniProtKB" id="Q8K1R3"/>
    </source>
</evidence>
<evidence type="ECO:0000255" key="2"/>
<evidence type="ECO:0000255" key="3">
    <source>
        <dbReference type="PROSITE-ProRule" id="PRU00117"/>
    </source>
</evidence>
<evidence type="ECO:0000255" key="4">
    <source>
        <dbReference type="PROSITE-ProRule" id="PRU00180"/>
    </source>
</evidence>
<evidence type="ECO:0000269" key="5">
    <source>
    </source>
</evidence>
<evidence type="ECO:0000269" key="6">
    <source>
    </source>
</evidence>
<evidence type="ECO:0000269" key="7">
    <source>
    </source>
</evidence>
<evidence type="ECO:0000269" key="8">
    <source>
    </source>
</evidence>
<evidence type="ECO:0000269" key="9">
    <source>
    </source>
</evidence>
<evidence type="ECO:0000269" key="10">
    <source>
    </source>
</evidence>
<evidence type="ECO:0000269" key="11">
    <source>
    </source>
</evidence>
<evidence type="ECO:0000269" key="12">
    <source>
    </source>
</evidence>
<evidence type="ECO:0000269" key="13">
    <source>
    </source>
</evidence>
<evidence type="ECO:0000269" key="14">
    <source>
    </source>
</evidence>
<evidence type="ECO:0000269" key="15">
    <source>
    </source>
</evidence>
<evidence type="ECO:0000269" key="16">
    <source>
    </source>
</evidence>
<evidence type="ECO:0000269" key="17">
    <source>
    </source>
</evidence>
<evidence type="ECO:0000269" key="18">
    <source>
    </source>
</evidence>
<evidence type="ECO:0000269" key="19">
    <source>
    </source>
</evidence>
<evidence type="ECO:0000269" key="20">
    <source>
    </source>
</evidence>
<evidence type="ECO:0000269" key="21">
    <source>
    </source>
</evidence>
<evidence type="ECO:0000269" key="22">
    <source>
    </source>
</evidence>
<evidence type="ECO:0000269" key="23">
    <source>
    </source>
</evidence>
<evidence type="ECO:0000269" key="24">
    <source>
    </source>
</evidence>
<evidence type="ECO:0000305" key="25"/>
<evidence type="ECO:0000305" key="26">
    <source>
    </source>
</evidence>
<evidence type="ECO:0000312" key="27">
    <source>
        <dbReference type="HGNC" id="HGNC:23166"/>
    </source>
</evidence>
<evidence type="ECO:0007744" key="28">
    <source>
    </source>
</evidence>
<evidence type="ECO:0007744" key="29">
    <source>
    </source>
</evidence>
<evidence type="ECO:0007744" key="30">
    <source>
    </source>
</evidence>
<evidence type="ECO:0007829" key="31">
    <source>
        <dbReference type="PDB" id="3U1K"/>
    </source>
</evidence>
<sequence>MAACRYCCSCLRLRPLSDGPFLLPRRDRALTQLQVRALWSSAGSRAVAVDLGNRKLEISSGKLARFADGSAVVQSGDTAVMVTAVSKTKPSPSQFMPLVVDYRQKAAAAGRIPTNYLRREIGTSDKEILTSRIIDRSIRPLFPAGYFYDTQVLCNLLAVDGVNEPDVLAINGASVALSLSDIPWNGPVGAVRIGIIDGEYVVNPTRKEMSSSTLNLVVAGAPKSQIVMLEASAENILQQDFCHAIKVGVKYTQQIIQGIQQLVKETGVTKRTPQKLFTPSPEIVKYTHKLAMERLYAVFTDYEHDKVSRDEAVNKIRLDTEEQLKEKFPEADPYEIIESFNVVAKEVFRSIVLNEYKRCDGRDLTSLRNVSCEVDMFKTLHGSALFQRGQTQVLCTVTFDSLESGIKSDQVITAINGIKDKNFMLHYEFPPYATNEIGKVTGLNRRELGHGALAEKALYPVIPRDFPFTIRVTSEVLESNGSSSMASACGGSLALMDSGVPISSAVAGVAIGLVTKTDPEKGEIEDYRLLTDILGIEDYNGDMDFKIAGTNKGITALQADIKLPGIPIKIVMEAIQQASVAKKEILQIMNKTISKPRASRKENGPVVETVQVPLSKRAKFVGPGGYNLKKLQAETGVTISQVDEETFSVFAPTPSAMHEARDFITEICKDDQEQQLEFGAVYTATITEIRDTGVMVKLYPNMTAVLLHNTQLDQRKIKHPTALGLEVGQEIQVKYFGRDPADGRMRLSRKVLQSPATTVVRTLNDRSSIVMGEPISQSSSNSQ</sequence>
<dbReference type="EC" id="2.7.7.8" evidence="14"/>
<dbReference type="EMBL" id="AJ458465">
    <property type="protein sequence ID" value="CAD30289.1"/>
    <property type="molecule type" value="mRNA"/>
</dbReference>
<dbReference type="EMBL" id="AY027528">
    <property type="protein sequence ID" value="AAK13047.1"/>
    <property type="molecule type" value="mRNA"/>
</dbReference>
<dbReference type="EMBL" id="AC015982">
    <property type="protein sequence ID" value="AAY24271.1"/>
    <property type="molecule type" value="Genomic_DNA"/>
</dbReference>
<dbReference type="EMBL" id="BC000862">
    <property type="protein sequence ID" value="AAH00862.2"/>
    <property type="molecule type" value="mRNA"/>
</dbReference>
<dbReference type="EMBL" id="BC005986">
    <property type="protein sequence ID" value="AAH05986.1"/>
    <property type="molecule type" value="mRNA"/>
</dbReference>
<dbReference type="EMBL" id="BC053660">
    <property type="protein sequence ID" value="AAH53660.1"/>
    <property type="molecule type" value="mRNA"/>
</dbReference>
<dbReference type="EMBL" id="AY290863">
    <property type="protein sequence ID" value="AAP44472.1"/>
    <property type="molecule type" value="mRNA"/>
</dbReference>
<dbReference type="EMBL" id="CR749867">
    <property type="protein sequence ID" value="CAH18709.1"/>
    <property type="molecule type" value="mRNA"/>
</dbReference>
<dbReference type="CCDS" id="CCDS1856.1"/>
<dbReference type="PIR" id="T50626">
    <property type="entry name" value="T50626"/>
</dbReference>
<dbReference type="RefSeq" id="NP_149100.2">
    <property type="nucleotide sequence ID" value="NM_033109.5"/>
</dbReference>
<dbReference type="PDB" id="3U1K">
    <property type="method" value="X-ray"/>
    <property type="resolution" value="2.13 A"/>
    <property type="chains" value="A/B/C/D=46-669"/>
</dbReference>
<dbReference type="PDB" id="5ZF6">
    <property type="method" value="X-ray"/>
    <property type="resolution" value="2.80 A"/>
    <property type="chains" value="A/B=46-669"/>
</dbReference>
<dbReference type="PDB" id="9KJR">
    <property type="method" value="EM"/>
    <property type="resolution" value="3.86 A"/>
    <property type="chains" value="A/B/C=46-753"/>
</dbReference>
<dbReference type="PDB" id="9KJT">
    <property type="method" value="EM"/>
    <property type="resolution" value="3.84 A"/>
    <property type="chains" value="A/B/C=46-783"/>
</dbReference>
<dbReference type="PDBsum" id="3U1K"/>
<dbReference type="PDBsum" id="5ZF6"/>
<dbReference type="PDBsum" id="9KJR"/>
<dbReference type="PDBsum" id="9KJT"/>
<dbReference type="EMDB" id="EMD-62368"/>
<dbReference type="EMDB" id="EMD-62369"/>
<dbReference type="EMDB" id="EMD-62370"/>
<dbReference type="EMDB" id="EMD-62371"/>
<dbReference type="EMDB" id="EMD-62372"/>
<dbReference type="EMDB" id="EMD-62373"/>
<dbReference type="EMDB" id="EMD-62374"/>
<dbReference type="EMDB" id="EMD-62375"/>
<dbReference type="EMDB" id="EMD-62376"/>
<dbReference type="SMR" id="Q8TCS8"/>
<dbReference type="BioGRID" id="124579">
    <property type="interactions" value="179"/>
</dbReference>
<dbReference type="ComplexPortal" id="CPX-2842">
    <property type="entry name" value="Mitochondrial degradosome complex"/>
</dbReference>
<dbReference type="DIP" id="DIP-50226N"/>
<dbReference type="FunCoup" id="Q8TCS8">
    <property type="interactions" value="2745"/>
</dbReference>
<dbReference type="IntAct" id="Q8TCS8">
    <property type="interactions" value="57"/>
</dbReference>
<dbReference type="MINT" id="Q8TCS8"/>
<dbReference type="STRING" id="9606.ENSP00000400646"/>
<dbReference type="GlyGen" id="Q8TCS8">
    <property type="glycosylation" value="2 sites, 1 O-linked glycan (1 site)"/>
</dbReference>
<dbReference type="iPTMnet" id="Q8TCS8"/>
<dbReference type="MetOSite" id="Q8TCS8"/>
<dbReference type="PhosphoSitePlus" id="Q8TCS8"/>
<dbReference type="SwissPalm" id="Q8TCS8"/>
<dbReference type="BioMuta" id="PNPT1"/>
<dbReference type="DMDM" id="115502437"/>
<dbReference type="REPRODUCTION-2DPAGE" id="IPI00291165"/>
<dbReference type="jPOST" id="Q8TCS8"/>
<dbReference type="MassIVE" id="Q8TCS8"/>
<dbReference type="PaxDb" id="9606-ENSP00000400646"/>
<dbReference type="PeptideAtlas" id="Q8TCS8"/>
<dbReference type="ProteomicsDB" id="74153"/>
<dbReference type="Pumba" id="Q8TCS8"/>
<dbReference type="Antibodypedia" id="30432">
    <property type="antibodies" value="340 antibodies from 31 providers"/>
</dbReference>
<dbReference type="DNASU" id="87178"/>
<dbReference type="Ensembl" id="ENST00000415374.5">
    <property type="protein sequence ID" value="ENSP00000393953.1"/>
    <property type="gene ID" value="ENSG00000138035.15"/>
</dbReference>
<dbReference type="Ensembl" id="ENST00000447944.7">
    <property type="protein sequence ID" value="ENSP00000400646.2"/>
    <property type="gene ID" value="ENSG00000138035.15"/>
</dbReference>
<dbReference type="GeneID" id="87178"/>
<dbReference type="KEGG" id="hsa:87178"/>
<dbReference type="MANE-Select" id="ENST00000447944.7">
    <property type="protein sequence ID" value="ENSP00000400646.2"/>
    <property type="RefSeq nucleotide sequence ID" value="NM_033109.5"/>
    <property type="RefSeq protein sequence ID" value="NP_149100.2"/>
</dbReference>
<dbReference type="UCSC" id="uc002rzf.4">
    <property type="organism name" value="human"/>
</dbReference>
<dbReference type="AGR" id="HGNC:23166"/>
<dbReference type="CTD" id="87178"/>
<dbReference type="DisGeNET" id="87178"/>
<dbReference type="GeneCards" id="PNPT1"/>
<dbReference type="HGNC" id="HGNC:23166">
    <property type="gene designation" value="PNPT1"/>
</dbReference>
<dbReference type="HPA" id="ENSG00000138035">
    <property type="expression patterns" value="Low tissue specificity"/>
</dbReference>
<dbReference type="MalaCards" id="PNPT1"/>
<dbReference type="MIM" id="608703">
    <property type="type" value="phenotype"/>
</dbReference>
<dbReference type="MIM" id="610316">
    <property type="type" value="gene"/>
</dbReference>
<dbReference type="MIM" id="614932">
    <property type="type" value="phenotype"/>
</dbReference>
<dbReference type="MIM" id="614934">
    <property type="type" value="phenotype"/>
</dbReference>
<dbReference type="neXtProt" id="NX_Q8TCS8"/>
<dbReference type="OpenTargets" id="ENSG00000138035"/>
<dbReference type="Orphanet" id="319514">
    <property type="disease" value="Combined oxidative phosphorylation defect type 13"/>
</dbReference>
<dbReference type="Orphanet" id="90636">
    <property type="disease" value="Rare autosomal recessive non-syndromic sensorineural deafness type DFNB"/>
</dbReference>
<dbReference type="Orphanet" id="101111">
    <property type="disease" value="Spinocerebellar ataxia type 25"/>
</dbReference>
<dbReference type="PharmGKB" id="PA134915354"/>
<dbReference type="VEuPathDB" id="HostDB:ENSG00000138035"/>
<dbReference type="eggNOG" id="KOG1067">
    <property type="taxonomic scope" value="Eukaryota"/>
</dbReference>
<dbReference type="GeneTree" id="ENSGT00390000014001"/>
<dbReference type="HOGENOM" id="CLU_004217_2_2_1"/>
<dbReference type="InParanoid" id="Q8TCS8"/>
<dbReference type="OMA" id="RFMFHYN"/>
<dbReference type="OrthoDB" id="437922at2759"/>
<dbReference type="PAN-GO" id="Q8TCS8">
    <property type="GO annotations" value="6 GO annotations based on evolutionary models"/>
</dbReference>
<dbReference type="PhylomeDB" id="Q8TCS8"/>
<dbReference type="TreeFam" id="TF315264"/>
<dbReference type="BRENDA" id="2.7.7.8">
    <property type="organism ID" value="2681"/>
</dbReference>
<dbReference type="PathwayCommons" id="Q8TCS8"/>
<dbReference type="Reactome" id="R-HSA-9836573">
    <property type="pathway name" value="Mitochondrial RNA degradation"/>
</dbReference>
<dbReference type="SignaLink" id="Q8TCS8"/>
<dbReference type="SIGNOR" id="Q8TCS8"/>
<dbReference type="BioGRID-ORCS" id="87178">
    <property type="hits" value="692 hits in 1180 CRISPR screens"/>
</dbReference>
<dbReference type="CD-CODE" id="5965E019">
    <property type="entry name" value="mtRNA granule"/>
</dbReference>
<dbReference type="CD-CODE" id="91857CE7">
    <property type="entry name" value="Nucleolus"/>
</dbReference>
<dbReference type="CD-CODE" id="DEE660B4">
    <property type="entry name" value="Stress granule"/>
</dbReference>
<dbReference type="ChiTaRS" id="PNPT1">
    <property type="organism name" value="human"/>
</dbReference>
<dbReference type="EvolutionaryTrace" id="Q8TCS8"/>
<dbReference type="GenomeRNAi" id="87178"/>
<dbReference type="Pharos" id="Q8TCS8">
    <property type="development level" value="Tbio"/>
</dbReference>
<dbReference type="PRO" id="PR:Q8TCS8"/>
<dbReference type="Proteomes" id="UP000005640">
    <property type="component" value="Chromosome 2"/>
</dbReference>
<dbReference type="RNAct" id="Q8TCS8">
    <property type="molecule type" value="protein"/>
</dbReference>
<dbReference type="Bgee" id="ENSG00000138035">
    <property type="expression patterns" value="Expressed in left ventricle myocardium and 186 other cell types or tissues"/>
</dbReference>
<dbReference type="ExpressionAtlas" id="Q8TCS8">
    <property type="expression patterns" value="baseline and differential"/>
</dbReference>
<dbReference type="GO" id="GO:0005737">
    <property type="term" value="C:cytoplasm"/>
    <property type="evidence" value="ECO:0000314"/>
    <property type="project" value="UniProtKB"/>
</dbReference>
<dbReference type="GO" id="GO:0005829">
    <property type="term" value="C:cytosol"/>
    <property type="evidence" value="ECO:0000314"/>
    <property type="project" value="HPA"/>
</dbReference>
<dbReference type="GO" id="GO:0005789">
    <property type="term" value="C:endoplasmic reticulum membrane"/>
    <property type="evidence" value="ECO:0007669"/>
    <property type="project" value="Ensembl"/>
</dbReference>
<dbReference type="GO" id="GO:0045025">
    <property type="term" value="C:mitochondrial degradosome"/>
    <property type="evidence" value="ECO:0000314"/>
    <property type="project" value="UniProtKB"/>
</dbReference>
<dbReference type="GO" id="GO:0005758">
    <property type="term" value="C:mitochondrial intermembrane space"/>
    <property type="evidence" value="ECO:0000314"/>
    <property type="project" value="UniProtKB"/>
</dbReference>
<dbReference type="GO" id="GO:0005759">
    <property type="term" value="C:mitochondrial matrix"/>
    <property type="evidence" value="ECO:0000314"/>
    <property type="project" value="FlyBase"/>
</dbReference>
<dbReference type="GO" id="GO:0005739">
    <property type="term" value="C:mitochondrion"/>
    <property type="evidence" value="ECO:0000314"/>
    <property type="project" value="UniProtKB"/>
</dbReference>
<dbReference type="GO" id="GO:0005840">
    <property type="term" value="C:ribosome"/>
    <property type="evidence" value="ECO:0007669"/>
    <property type="project" value="Ensembl"/>
</dbReference>
<dbReference type="GO" id="GO:0000175">
    <property type="term" value="F:3'-5'-RNA exonuclease activity"/>
    <property type="evidence" value="ECO:0000314"/>
    <property type="project" value="UniProtKB"/>
</dbReference>
<dbReference type="GO" id="GO:0042802">
    <property type="term" value="F:identical protein binding"/>
    <property type="evidence" value="ECO:0000353"/>
    <property type="project" value="IntAct"/>
</dbReference>
<dbReference type="GO" id="GO:0035198">
    <property type="term" value="F:miRNA binding"/>
    <property type="evidence" value="ECO:0000314"/>
    <property type="project" value="UniProtKB"/>
</dbReference>
<dbReference type="GO" id="GO:0034046">
    <property type="term" value="F:poly(G) binding"/>
    <property type="evidence" value="ECO:0000314"/>
    <property type="project" value="UniProtKB"/>
</dbReference>
<dbReference type="GO" id="GO:0008266">
    <property type="term" value="F:poly(U) RNA binding"/>
    <property type="evidence" value="ECO:0000314"/>
    <property type="project" value="UniProtKB"/>
</dbReference>
<dbReference type="GO" id="GO:0004654">
    <property type="term" value="F:polyribonucleotide nucleotidyltransferase activity"/>
    <property type="evidence" value="ECO:0000314"/>
    <property type="project" value="UniProtKB"/>
</dbReference>
<dbReference type="GO" id="GO:0003723">
    <property type="term" value="F:RNA binding"/>
    <property type="evidence" value="ECO:0007005"/>
    <property type="project" value="UniProtKB"/>
</dbReference>
<dbReference type="GO" id="GO:0035458">
    <property type="term" value="P:cellular response to interferon-beta"/>
    <property type="evidence" value="ECO:0000314"/>
    <property type="project" value="UniProtKB"/>
</dbReference>
<dbReference type="GO" id="GO:0034599">
    <property type="term" value="P:cellular response to oxidative stress"/>
    <property type="evidence" value="ECO:0000314"/>
    <property type="project" value="UniProtKB"/>
</dbReference>
<dbReference type="GO" id="GO:0097421">
    <property type="term" value="P:liver regeneration"/>
    <property type="evidence" value="ECO:0007669"/>
    <property type="project" value="Ensembl"/>
</dbReference>
<dbReference type="GO" id="GO:0000958">
    <property type="term" value="P:mitochondrial mRNA catabolic process"/>
    <property type="evidence" value="ECO:0000314"/>
    <property type="project" value="UniProtKB"/>
</dbReference>
<dbReference type="GO" id="GO:0097222">
    <property type="term" value="P:mitochondrial mRNA polyadenylation"/>
    <property type="evidence" value="ECO:0000315"/>
    <property type="project" value="UniProtKB"/>
</dbReference>
<dbReference type="GO" id="GO:0000965">
    <property type="term" value="P:mitochondrial RNA 3'-end processing"/>
    <property type="evidence" value="ECO:0000315"/>
    <property type="project" value="UniProtKB"/>
</dbReference>
<dbReference type="GO" id="GO:0000964">
    <property type="term" value="P:mitochondrial RNA 5'-end processing"/>
    <property type="evidence" value="ECO:0000315"/>
    <property type="project" value="UniProtKB"/>
</dbReference>
<dbReference type="GO" id="GO:0000957">
    <property type="term" value="P:mitochondrial RNA catabolic process"/>
    <property type="evidence" value="ECO:0000314"/>
    <property type="project" value="UniProtKB"/>
</dbReference>
<dbReference type="GO" id="GO:0007005">
    <property type="term" value="P:mitochondrion organization"/>
    <property type="evidence" value="ECO:0000250"/>
    <property type="project" value="UniProtKB"/>
</dbReference>
<dbReference type="GO" id="GO:0006402">
    <property type="term" value="P:mRNA catabolic process"/>
    <property type="evidence" value="ECO:0000314"/>
    <property type="project" value="UniProtKB"/>
</dbReference>
<dbReference type="GO" id="GO:0006397">
    <property type="term" value="P:mRNA processing"/>
    <property type="evidence" value="ECO:0007669"/>
    <property type="project" value="UniProtKB-KW"/>
</dbReference>
<dbReference type="GO" id="GO:0071042">
    <property type="term" value="P:nuclear polyadenylation-dependent mRNA catabolic process"/>
    <property type="evidence" value="ECO:0000314"/>
    <property type="project" value="UniProtKB"/>
</dbReference>
<dbReference type="GO" id="GO:2000627">
    <property type="term" value="P:positive regulation of miRNA catabolic process"/>
    <property type="evidence" value="ECO:0000314"/>
    <property type="project" value="UniProtKB"/>
</dbReference>
<dbReference type="GO" id="GO:0000962">
    <property type="term" value="P:positive regulation of mitochondrial RNA catabolic process"/>
    <property type="evidence" value="ECO:0000314"/>
    <property type="project" value="UniProtKB"/>
</dbReference>
<dbReference type="GO" id="GO:0061014">
    <property type="term" value="P:positive regulation of mRNA catabolic process"/>
    <property type="evidence" value="ECO:0000315"/>
    <property type="project" value="UniProtKB"/>
</dbReference>
<dbReference type="GO" id="GO:0051260">
    <property type="term" value="P:protein homooligomerization"/>
    <property type="evidence" value="ECO:0000314"/>
    <property type="project" value="UniProtKB"/>
</dbReference>
<dbReference type="GO" id="GO:0070207">
    <property type="term" value="P:protein homotrimerization"/>
    <property type="evidence" value="ECO:0000314"/>
    <property type="project" value="UniProtKB"/>
</dbReference>
<dbReference type="GO" id="GO:0043457">
    <property type="term" value="P:regulation of cellular respiration"/>
    <property type="evidence" value="ECO:0000250"/>
    <property type="project" value="UniProtKB"/>
</dbReference>
<dbReference type="GO" id="GO:2000772">
    <property type="term" value="P:regulation of cellular senescence"/>
    <property type="evidence" value="ECO:0000314"/>
    <property type="project" value="UniProtKB"/>
</dbReference>
<dbReference type="GO" id="GO:0051591">
    <property type="term" value="P:response to cAMP"/>
    <property type="evidence" value="ECO:0007669"/>
    <property type="project" value="Ensembl"/>
</dbReference>
<dbReference type="GO" id="GO:0060416">
    <property type="term" value="P:response to growth hormone"/>
    <property type="evidence" value="ECO:0007669"/>
    <property type="project" value="Ensembl"/>
</dbReference>
<dbReference type="GO" id="GO:0006401">
    <property type="term" value="P:RNA catabolic process"/>
    <property type="evidence" value="ECO:0000314"/>
    <property type="project" value="UniProtKB"/>
</dbReference>
<dbReference type="GO" id="GO:0035927">
    <property type="term" value="P:RNA import into mitochondrion"/>
    <property type="evidence" value="ECO:0000314"/>
    <property type="project" value="UniProtKB"/>
</dbReference>
<dbReference type="GO" id="GO:0035928">
    <property type="term" value="P:rRNA import into mitochondrion"/>
    <property type="evidence" value="ECO:0000314"/>
    <property type="project" value="UniProtKB"/>
</dbReference>
<dbReference type="CDD" id="cd09033">
    <property type="entry name" value="KH-I_PNPT1"/>
    <property type="match status" value="1"/>
</dbReference>
<dbReference type="CDD" id="cd11363">
    <property type="entry name" value="RNase_PH_PNPase_1"/>
    <property type="match status" value="1"/>
</dbReference>
<dbReference type="CDD" id="cd11364">
    <property type="entry name" value="RNase_PH_PNPase_2"/>
    <property type="match status" value="1"/>
</dbReference>
<dbReference type="FunFam" id="3.30.230.70:FF:000032">
    <property type="entry name" value="Polyribonucleotide nucleotidyltransferase 1"/>
    <property type="match status" value="1"/>
</dbReference>
<dbReference type="FunFam" id="1.10.10.400:FF:000001">
    <property type="entry name" value="Polyribonucleotide nucleotidyltransferase 1, mitochondrial"/>
    <property type="match status" value="1"/>
</dbReference>
<dbReference type="FunFam" id="3.30.1370.10:FF:000044">
    <property type="entry name" value="Polyribonucleotide nucleotidyltransferase 1, mitochondrial"/>
    <property type="match status" value="1"/>
</dbReference>
<dbReference type="FunFam" id="2.40.50.140:FF:000113">
    <property type="entry name" value="polyribonucleotide nucleotidyltransferase 1, mitochondrial"/>
    <property type="match status" value="1"/>
</dbReference>
<dbReference type="FunFam" id="3.30.230.70:FF:000008">
    <property type="entry name" value="polyribonucleotide nucleotidyltransferase 1, mitochondrial"/>
    <property type="match status" value="1"/>
</dbReference>
<dbReference type="Gene3D" id="3.30.230.70">
    <property type="entry name" value="GHMP Kinase, N-terminal domain"/>
    <property type="match status" value="2"/>
</dbReference>
<dbReference type="Gene3D" id="3.30.1370.10">
    <property type="entry name" value="K Homology domain, type 1"/>
    <property type="match status" value="1"/>
</dbReference>
<dbReference type="Gene3D" id="2.40.50.140">
    <property type="entry name" value="Nucleic acid-binding proteins"/>
    <property type="match status" value="1"/>
</dbReference>
<dbReference type="Gene3D" id="1.10.10.400">
    <property type="entry name" value="Polyribonucleotide nucleotidyltransferase, RNA-binding domain"/>
    <property type="match status" value="1"/>
</dbReference>
<dbReference type="InterPro" id="IPR001247">
    <property type="entry name" value="ExoRNase_PH_dom1"/>
</dbReference>
<dbReference type="InterPro" id="IPR015847">
    <property type="entry name" value="ExoRNase_PH_dom2"/>
</dbReference>
<dbReference type="InterPro" id="IPR036345">
    <property type="entry name" value="ExoRNase_PH_dom2_sf"/>
</dbReference>
<dbReference type="InterPro" id="IPR004087">
    <property type="entry name" value="KH_dom"/>
</dbReference>
<dbReference type="InterPro" id="IPR004088">
    <property type="entry name" value="KH_dom_type_1"/>
</dbReference>
<dbReference type="InterPro" id="IPR036612">
    <property type="entry name" value="KH_dom_type_1_sf"/>
</dbReference>
<dbReference type="InterPro" id="IPR012340">
    <property type="entry name" value="NA-bd_OB-fold"/>
</dbReference>
<dbReference type="InterPro" id="IPR012162">
    <property type="entry name" value="PNPase"/>
</dbReference>
<dbReference type="InterPro" id="IPR027408">
    <property type="entry name" value="PNPase/RNase_PH_dom_sf"/>
</dbReference>
<dbReference type="InterPro" id="IPR015848">
    <property type="entry name" value="PNPase_PH_RNA-bd_bac/org-type"/>
</dbReference>
<dbReference type="InterPro" id="IPR036456">
    <property type="entry name" value="PNPase_PH_RNA-bd_sf"/>
</dbReference>
<dbReference type="InterPro" id="IPR020568">
    <property type="entry name" value="Ribosomal_Su5_D2-typ_SF"/>
</dbReference>
<dbReference type="InterPro" id="IPR003029">
    <property type="entry name" value="S1_domain"/>
</dbReference>
<dbReference type="NCBIfam" id="TIGR03591">
    <property type="entry name" value="polynuc_phos"/>
    <property type="match status" value="1"/>
</dbReference>
<dbReference type="NCBIfam" id="NF008805">
    <property type="entry name" value="PRK11824.1"/>
    <property type="match status" value="1"/>
</dbReference>
<dbReference type="PANTHER" id="PTHR11252">
    <property type="entry name" value="POLYRIBONUCLEOTIDE NUCLEOTIDYLTRANSFERASE"/>
    <property type="match status" value="1"/>
</dbReference>
<dbReference type="PANTHER" id="PTHR11252:SF9">
    <property type="entry name" value="POLYRIBONUCLEOTIDE NUCLEOTIDYLTRANSFERASE 1, MITOCHONDRIAL"/>
    <property type="match status" value="1"/>
</dbReference>
<dbReference type="Pfam" id="PF00013">
    <property type="entry name" value="KH_1"/>
    <property type="match status" value="1"/>
</dbReference>
<dbReference type="Pfam" id="PF03726">
    <property type="entry name" value="PNPase"/>
    <property type="match status" value="1"/>
</dbReference>
<dbReference type="Pfam" id="PF01138">
    <property type="entry name" value="RNase_PH"/>
    <property type="match status" value="2"/>
</dbReference>
<dbReference type="Pfam" id="PF03725">
    <property type="entry name" value="RNase_PH_C"/>
    <property type="match status" value="1"/>
</dbReference>
<dbReference type="Pfam" id="PF00575">
    <property type="entry name" value="S1"/>
    <property type="match status" value="1"/>
</dbReference>
<dbReference type="PIRSF" id="PIRSF005499">
    <property type="entry name" value="PNPase"/>
    <property type="match status" value="1"/>
</dbReference>
<dbReference type="SMART" id="SM00322">
    <property type="entry name" value="KH"/>
    <property type="match status" value="1"/>
</dbReference>
<dbReference type="SMART" id="SM00316">
    <property type="entry name" value="S1"/>
    <property type="match status" value="1"/>
</dbReference>
<dbReference type="SUPFAM" id="SSF54791">
    <property type="entry name" value="Eukaryotic type KH-domain (KH-domain type I)"/>
    <property type="match status" value="1"/>
</dbReference>
<dbReference type="SUPFAM" id="SSF50249">
    <property type="entry name" value="Nucleic acid-binding proteins"/>
    <property type="match status" value="1"/>
</dbReference>
<dbReference type="SUPFAM" id="SSF46915">
    <property type="entry name" value="Polynucleotide phosphorylase/guanosine pentaphosphate synthase (PNPase/GPSI), domain 3"/>
    <property type="match status" value="1"/>
</dbReference>
<dbReference type="SUPFAM" id="SSF55666">
    <property type="entry name" value="Ribonuclease PH domain 2-like"/>
    <property type="match status" value="2"/>
</dbReference>
<dbReference type="SUPFAM" id="SSF54211">
    <property type="entry name" value="Ribosomal protein S5 domain 2-like"/>
    <property type="match status" value="2"/>
</dbReference>
<dbReference type="PROSITE" id="PS50084">
    <property type="entry name" value="KH_TYPE_1"/>
    <property type="match status" value="1"/>
</dbReference>
<dbReference type="PROSITE" id="PS50126">
    <property type="entry name" value="S1"/>
    <property type="match status" value="1"/>
</dbReference>
<proteinExistence type="evidence at protein level"/>
<feature type="transit peptide" description="Mitochondrion" evidence="2">
    <location>
        <begin position="1"/>
        <end position="45"/>
    </location>
</feature>
<feature type="chain" id="PRO_0000024751" description="Polyribonucleotide nucleotidyltransferase 1, mitochondrial">
    <location>
        <begin position="46"/>
        <end position="783"/>
    </location>
</feature>
<feature type="domain" description="KH" evidence="3">
    <location>
        <begin position="605"/>
        <end position="664"/>
    </location>
</feature>
<feature type="domain" description="S1 motif" evidence="4">
    <location>
        <begin position="679"/>
        <end position="750"/>
    </location>
</feature>
<feature type="modified residue" description="N6-acetyllysine" evidence="1">
    <location>
        <position position="250"/>
    </location>
</feature>
<feature type="modified residue" description="N6-acetyllysine" evidence="28">
    <location>
        <position position="264"/>
    </location>
</feature>
<feature type="modified residue" description="N6-acetyllysine" evidence="28">
    <location>
        <position position="285"/>
    </location>
</feature>
<feature type="modified residue" description="N6-acetyllysine" evidence="28">
    <location>
        <position position="289"/>
    </location>
</feature>
<feature type="modified residue" description="N6-succinyllysine" evidence="1">
    <location>
        <position position="552"/>
    </location>
</feature>
<feature type="modified residue" description="Phosphoserine" evidence="30">
    <location>
        <position position="754"/>
    </location>
</feature>
<feature type="modified residue" description="Phosphoserine" evidence="29">
    <location>
        <position position="782"/>
    </location>
</feature>
<feature type="sequence variant" id="VAR_027787" description="In dbSNP:rs782572." evidence="5 6 9">
    <original>I</original>
    <variation>V</variation>
    <location>
        <position position="121"/>
    </location>
</feature>
<feature type="sequence variant" id="VAR_050610" description="In dbSNP:rs34928857.">
    <original>E</original>
    <variation>Q</variation>
    <location>
        <position position="230"/>
    </location>
</feature>
<feature type="sequence variant" id="VAR_069248" description="In COXPD13; the mutation alters multimerization of the protein; dbSNP:rs397514598." evidence="21">
    <original>Q</original>
    <variation>R</variation>
    <location>
        <position position="387"/>
    </location>
</feature>
<feature type="sequence variant" id="VAR_069249" description="In DFNB70; results in a hypofunctional protein leading to disturbed enzyme trimerization and impaired mitochondrial RNA import; dbSNP:rs397514599." evidence="20">
    <original>E</original>
    <variation>G</variation>
    <location>
        <position position="475"/>
    </location>
</feature>
<feature type="sequence variant" id="VAR_027788" description="In dbSNP:rs7594497.">
    <original>N</original>
    <variation>D</variation>
    <location>
        <position position="590"/>
    </location>
</feature>
<feature type="mutagenesis site" description="Inhibits poly(A) polymerase and RNA degradation activities. Inhibits the import or stabilization of RNase P RNA into the mitochondrial matrix. Does not inhibit homotrimerization activity." evidence="19">
    <original>D</original>
    <variation>G</variation>
    <location>
        <position position="135"/>
    </location>
</feature>
<feature type="mutagenesis site" description="Stimulates in vitro poly(A) polymerase activity. Inhibits RNA degradation activity. Does not inhibit the import or stabilization of RNase P RNA into the mitochondrial matrix. Does not inhibit homotrimerization activity." evidence="19">
    <original>RR</original>
    <variation>EE</variation>
    <location>
        <begin position="445"/>
        <end position="446"/>
    </location>
</feature>
<feature type="mutagenesis site" description="Inhibits poly(A) polymerase and RNA degradation activities. Does not inhibit the import or stabilization of RNase P RNA into the mitochondrial matrix. Does not inhibit homotrimerization activity." evidence="19">
    <original>S</original>
    <variation>A</variation>
    <location>
        <position position="484"/>
    </location>
</feature>
<feature type="mutagenesis site" description="Stimulates in vitro poly(A) polymerase activity. Inhibits RNA degradation activity. Inhibits the import or stabilization of RNase P RNA into the mitochondrial matrix. Does not inhibit homotrimerization activity." evidence="19">
    <original>D</original>
    <variation>A</variation>
    <location>
        <position position="544"/>
    </location>
</feature>
<feature type="sequence conflict" description="In Ref. 2; AAK13047." evidence="25" ref="2">
    <original>A</original>
    <variation>V</variation>
    <location>
        <position position="656"/>
    </location>
</feature>
<feature type="strand" evidence="31">
    <location>
        <begin position="46"/>
        <end position="50"/>
    </location>
</feature>
<feature type="strand" evidence="31">
    <location>
        <begin position="52"/>
        <end position="63"/>
    </location>
</feature>
<feature type="strand" evidence="31">
    <location>
        <begin position="67"/>
        <end position="75"/>
    </location>
</feature>
<feature type="strand" evidence="31">
    <location>
        <begin position="78"/>
        <end position="86"/>
    </location>
</feature>
<feature type="strand" evidence="31">
    <location>
        <begin position="92"/>
        <end position="95"/>
    </location>
</feature>
<feature type="strand" evidence="31">
    <location>
        <begin position="98"/>
        <end position="103"/>
    </location>
</feature>
<feature type="strand" evidence="31">
    <location>
        <begin position="105"/>
        <end position="107"/>
    </location>
</feature>
<feature type="turn" evidence="31">
    <location>
        <begin position="108"/>
        <end position="111"/>
    </location>
</feature>
<feature type="helix" evidence="31">
    <location>
        <begin position="125"/>
        <end position="138"/>
    </location>
</feature>
<feature type="helix" evidence="31">
    <location>
        <begin position="139"/>
        <end position="141"/>
    </location>
</feature>
<feature type="strand" evidence="31">
    <location>
        <begin position="150"/>
        <end position="158"/>
    </location>
</feature>
<feature type="strand" evidence="31">
    <location>
        <begin position="161"/>
        <end position="163"/>
    </location>
</feature>
<feature type="helix" evidence="31">
    <location>
        <begin position="165"/>
        <end position="179"/>
    </location>
</feature>
<feature type="strand" evidence="31">
    <location>
        <begin position="180"/>
        <end position="182"/>
    </location>
</feature>
<feature type="strand" evidence="31">
    <location>
        <begin position="189"/>
        <end position="196"/>
    </location>
</feature>
<feature type="strand" evidence="31">
    <location>
        <begin position="199"/>
        <end position="203"/>
    </location>
</feature>
<feature type="helix" evidence="31">
    <location>
        <begin position="206"/>
        <end position="210"/>
    </location>
</feature>
<feature type="strand" evidence="31">
    <location>
        <begin position="212"/>
        <end position="221"/>
    </location>
</feature>
<feature type="turn" evidence="31">
    <location>
        <begin position="222"/>
        <end position="224"/>
    </location>
</feature>
<feature type="strand" evidence="31">
    <location>
        <begin position="225"/>
        <end position="236"/>
    </location>
</feature>
<feature type="helix" evidence="31">
    <location>
        <begin position="238"/>
        <end position="266"/>
    </location>
</feature>
<feature type="helix" evidence="31">
    <location>
        <begin position="281"/>
        <end position="299"/>
    </location>
</feature>
<feature type="helix" evidence="31">
    <location>
        <begin position="306"/>
        <end position="327"/>
    </location>
</feature>
<feature type="helix" evidence="31">
    <location>
        <begin position="333"/>
        <end position="355"/>
    </location>
</feature>
<feature type="strand" evidence="31">
    <location>
        <begin position="370"/>
        <end position="374"/>
    </location>
</feature>
<feature type="strand" evidence="31">
    <location>
        <begin position="380"/>
        <end position="388"/>
    </location>
</feature>
<feature type="strand" evidence="31">
    <location>
        <begin position="391"/>
        <end position="400"/>
    </location>
</feature>
<feature type="helix" evidence="31">
    <location>
        <begin position="402"/>
        <end position="405"/>
    </location>
</feature>
<feature type="helix" evidence="31">
    <location>
        <begin position="410"/>
        <end position="416"/>
    </location>
</feature>
<feature type="helix" evidence="31">
    <location>
        <begin position="420"/>
        <end position="422"/>
    </location>
</feature>
<feature type="strand" evidence="31">
    <location>
        <begin position="423"/>
        <end position="428"/>
    </location>
</feature>
<feature type="helix" evidence="31">
    <location>
        <begin position="431"/>
        <end position="434"/>
    </location>
</feature>
<feature type="helix" evidence="31">
    <location>
        <begin position="445"/>
        <end position="458"/>
    </location>
</feature>
<feature type="helix" evidence="31">
    <location>
        <begin position="459"/>
        <end position="461"/>
    </location>
</feature>
<feature type="strand" evidence="31">
    <location>
        <begin position="467"/>
        <end position="478"/>
    </location>
</feature>
<feature type="helix" evidence="31">
    <location>
        <begin position="483"/>
        <end position="497"/>
    </location>
</feature>
<feature type="strand" evidence="31">
    <location>
        <begin position="507"/>
        <end position="517"/>
    </location>
</feature>
<feature type="strand" evidence="31">
    <location>
        <begin position="519"/>
        <end position="522"/>
    </location>
</feature>
<feature type="strand" evidence="31">
    <location>
        <begin position="524"/>
        <end position="532"/>
    </location>
</feature>
<feature type="helix" evidence="31">
    <location>
        <begin position="535"/>
        <end position="539"/>
    </location>
</feature>
<feature type="strand" evidence="31">
    <location>
        <begin position="541"/>
        <end position="549"/>
    </location>
</feature>
<feature type="strand" evidence="31">
    <location>
        <begin position="554"/>
        <end position="561"/>
    </location>
</feature>
<feature type="helix" evidence="31">
    <location>
        <begin position="568"/>
        <end position="592"/>
    </location>
</feature>
<feature type="strand" evidence="31">
    <location>
        <begin position="606"/>
        <end position="611"/>
    </location>
</feature>
<feature type="helix" evidence="31">
    <location>
        <begin position="614"/>
        <end position="621"/>
    </location>
</feature>
<feature type="helix" evidence="31">
    <location>
        <begin position="623"/>
        <end position="625"/>
    </location>
</feature>
<feature type="helix" evidence="31">
    <location>
        <begin position="626"/>
        <end position="635"/>
    </location>
</feature>
<feature type="strand" evidence="31">
    <location>
        <begin position="638"/>
        <end position="641"/>
    </location>
</feature>
<feature type="strand" evidence="31">
    <location>
        <begin position="643"/>
        <end position="653"/>
    </location>
</feature>
<feature type="helix" evidence="31">
    <location>
        <begin position="654"/>
        <end position="663"/>
    </location>
</feature>
<comment type="function">
    <text evidence="6 7 8 10 11 12 14 15 16 17 18 19 22 24">RNA-binding protein implicated in numerous RNA metabolic processes (PubMed:29967381, PubMed:39019044). Catalyzes the phosphorolysis of single-stranded polyribonucleotides processively in the 3'-to-5' direction (PubMed:29967381, PubMed:39019044). Mitochondrial intermembrane factor with RNA-processing exoribonulease activity (PubMed:29967381, PubMed:39019044). Component of the mitochondrial degradosome (mtEXO) complex, that degrades 3' overhang double-stranded RNA with a 3'-to-5' directionality in an ATP-dependent manner (PubMed:29967381, PubMed:39019044). Involved in the degradation of non-coding mitochondrial transcripts (MT-ncRNA) and tRNA-like molecules (PubMed:29967381, PubMed:39019044). Required for correct processing and polyadenylation of mitochondrial mRNAs. Plays a role as a cytoplasmic RNA import factor that mediates the translocation of small RNA components, like the 5S RNA, the RNA subunit of ribonuclease P and the mitochondrial RNA-processing (MRP) RNA, into the mitochondrial matrix. Plays a role in mitochondrial morphogenesis and respiration; regulates the expression of the electron transport chain (ETC) components at the mRNA and protein levels. In the cytoplasm, shows a 3'-to-5' exoribonuclease mediating mRNA degradation activity; degrades c-myc mRNA upon treatment with IFNB1/IFN-beta, resulting in a growth arrest in melanoma cells. Regulates the stability of specific mature miRNAs in melanoma cells; specifically and selectively degrades miR-221, preferentially. Also plays a role in RNA cell surveillance by cleaning up oxidized RNAs. Binds to the RNA subunit of ribonuclease P, MRP RNA and miR-221 microRNA.</text>
</comment>
<comment type="catalytic activity">
    <reaction evidence="14">
        <text>RNA(n+1) + phosphate = RNA(n) + a ribonucleoside 5'-diphosphate</text>
        <dbReference type="Rhea" id="RHEA:22096"/>
        <dbReference type="Rhea" id="RHEA-COMP:14527"/>
        <dbReference type="Rhea" id="RHEA-COMP:17342"/>
        <dbReference type="ChEBI" id="CHEBI:43474"/>
        <dbReference type="ChEBI" id="CHEBI:57930"/>
        <dbReference type="ChEBI" id="CHEBI:140395"/>
        <dbReference type="EC" id="2.7.7.8"/>
    </reaction>
    <physiologicalReaction direction="left-to-right" evidence="26">
        <dbReference type="Rhea" id="RHEA:22097"/>
    </physiologicalReaction>
</comment>
<comment type="subunit">
    <text evidence="12 17 22 24">Homotrimer; in free form (PubMed:19509288). Homooligomer (PubMed:19509288). Component of the mitochondrial degradosome (mtEXO) complex which is a heteropentamer containing 2 copies of SUPV3L1 and 3 copies of PNPT1 (PubMed:19509288, PubMed:29967381, PubMed:39019044). As part of the mitochondrial degradosome complex, interacts with GRSF1 in an RNA-dependent manner; the interaction enhances the activity of the complex (PubMed:29967381). Interacts with TCL1A; the interaction has no effect on PNPT1 exonuclease activity (PubMed:16934922).</text>
</comment>
<comment type="interaction">
    <interactant intactId="EBI-1052020">
        <id>Q8TCS8</id>
    </interactant>
    <interactant intactId="EBI-12002366">
        <id>P78563-4</id>
        <label>ADARB1</label>
    </interactant>
    <organismsDiffer>false</organismsDiffer>
    <experiments>3</experiments>
</comment>
<comment type="interaction">
    <interactant intactId="EBI-1052020">
        <id>Q8TCS8</id>
    </interactant>
    <interactant intactId="EBI-1052020">
        <id>Q8TCS8</id>
        <label>PNPT1</label>
    </interactant>
    <organismsDiffer>false</organismsDiffer>
    <experiments>2</experiments>
</comment>
<comment type="interaction">
    <interactant intactId="EBI-1052020">
        <id>Q8TCS8</id>
    </interactant>
    <interactant intactId="EBI-2876787">
        <id>Q8IYB8</id>
        <label>SUPV3L1</label>
    </interactant>
    <organismsDiffer>false</organismsDiffer>
    <experiments>9</experiments>
</comment>
<comment type="subcellular location">
    <subcellularLocation>
        <location evidence="10">Cytoplasm</location>
    </subcellularLocation>
    <subcellularLocation>
        <location evidence="8 10">Mitochondrion matrix</location>
    </subcellularLocation>
    <subcellularLocation>
        <location evidence="13">Mitochondrion intermembrane space</location>
        <topology evidence="13">Peripheral membrane protein</topology>
    </subcellularLocation>
</comment>
<comment type="induction">
    <text evidence="6 11 13">Up-regulated in cells upon senescence and terminal differentiation. Up-regulated after treatment with IFNB1/IFN-beta.</text>
</comment>
<comment type="disease" evidence="21">
    <disease id="DI-03613">
        <name>Combined oxidative phosphorylation deficiency 13</name>
        <acronym>COXPD13</acronym>
        <description>A mitochondrial disorder characterized by early onset severe encephalomyopathy, dystonia, choreoathetosis, bucofacial dyskinesias and combined mitochondrial respiratory chain deficiency. Nerve conductions velocities are decreased. Levels of plasma and cerebrospinal fluid lactate are increased.</description>
        <dbReference type="MIM" id="614932"/>
    </disease>
    <text>The disease is caused by variants affecting the gene represented in this entry.</text>
</comment>
<comment type="disease" evidence="20">
    <disease id="DI-03614">
        <name>Deafness, autosomal recessive, 70, with or without adult-onset neurodegeneration</name>
        <acronym>DFNB70</acronym>
        <description>A form of non-syndromic deafness characterized by severe, bilateral hearing impairment with prelingual onset, resulting in inability to acquire normal speech. Affected individuals may develop a neurodegenerative disease in adulthood, including ataxia with loss of ambulation, optic atrophy, dystonia or spasticity, and cognitive decline with psychiatric features.</description>
        <dbReference type="MIM" id="614934"/>
    </disease>
    <text>The disease is caused by variants affecting the gene represented in this entry.</text>
</comment>
<comment type="disease" evidence="23">
    <disease id="DI-06450">
        <name>Spinocerebellar ataxia 25</name>
        <acronym>SCA25</acronym>
        <description>An autosomal dominant form of spinocerebellar ataxia, a clinically and genetically heterogeneous group of cerebellar disorders. Patients show progressive incoordination of gait and often poor coordination of hands, speech and eye movements, due to degeneration of the cerebellum with variable involvement of the brainstem and spinal cord. SCA25 is characterized by the onset of lower limb ataxia and gait difficulties in the first few decades of life, although later onset has been reported. There is incomplete penetrance and variable expressivity, even within families.</description>
        <dbReference type="MIM" id="608703"/>
    </disease>
    <text evidence="23">The disease is caused by variants affecting the gene represented in this entry. Both genetic variants associated so far with this disease are affecting splicing.</text>
</comment>
<comment type="similarity">
    <text evidence="25">Belongs to the polyribonucleotide nucleotidyltransferase family.</text>
</comment>
<protein>
    <recommendedName>
        <fullName evidence="25">Polyribonucleotide nucleotidyltransferase 1, mitochondrial</fullName>
        <ecNumber evidence="14">2.7.7.8</ecNumber>
    </recommendedName>
    <alternativeName>
        <fullName>3'-5' RNA exonuclease OLD35</fullName>
    </alternativeName>
    <alternativeName>
        <fullName>PNPase old-35</fullName>
    </alternativeName>
    <alternativeName>
        <fullName>Polynucleotide phosphorylase 1</fullName>
        <shortName>PNPase 1</shortName>
    </alternativeName>
    <alternativeName>
        <fullName>Polynucleotide phosphorylase-like protein</fullName>
    </alternativeName>
</protein>
<accession>Q8TCS8</accession>
<accession>Q53SU0</accession>
<accession>Q68CN1</accession>
<accession>Q7Z7D1</accession>
<accession>Q8IWX1</accession>
<accession>Q96T05</accession>
<accession>Q9BRU3</accession>
<accession>Q9BVX0</accession>
<name>PNPT1_HUMAN</name>
<keyword id="KW-0002">3D-structure</keyword>
<keyword id="KW-0007">Acetylation</keyword>
<keyword id="KW-0963">Cytoplasm</keyword>
<keyword id="KW-0209">Deafness</keyword>
<keyword id="KW-0225">Disease variant</keyword>
<keyword id="KW-0269">Exonuclease</keyword>
<keyword id="KW-0378">Hydrolase</keyword>
<keyword id="KW-0472">Membrane</keyword>
<keyword id="KW-0496">Mitochondrion</keyword>
<keyword id="KW-0507">mRNA processing</keyword>
<keyword id="KW-0523">Neurodegeneration</keyword>
<keyword id="KW-1010">Non-syndromic deafness</keyword>
<keyword id="KW-0540">Nuclease</keyword>
<keyword id="KW-0548">Nucleotidyltransferase</keyword>
<keyword id="KW-0597">Phosphoprotein</keyword>
<keyword id="KW-1274">Primary mitochondrial disease</keyword>
<keyword id="KW-1267">Proteomics identification</keyword>
<keyword id="KW-1185">Reference proteome</keyword>
<keyword id="KW-0694">RNA-binding</keyword>
<keyword id="KW-0950">Spinocerebellar ataxia</keyword>
<keyword id="KW-0808">Transferase</keyword>
<keyword id="KW-0809">Transit peptide</keyword>
<keyword id="KW-0813">Transport</keyword>